<evidence type="ECO:0000250" key="1"/>
<evidence type="ECO:0000250" key="2">
    <source>
        <dbReference type="UniProtKB" id="P36068"/>
    </source>
</evidence>
<evidence type="ECO:0000305" key="3"/>
<name>SHE2_YEAS2</name>
<organism>
    <name type="scientific">Saccharomyces cerevisiae (strain JAY291)</name>
    <name type="common">Baker's yeast</name>
    <dbReference type="NCBI Taxonomy" id="574961"/>
    <lineage>
        <taxon>Eukaryota</taxon>
        <taxon>Fungi</taxon>
        <taxon>Dikarya</taxon>
        <taxon>Ascomycota</taxon>
        <taxon>Saccharomycotina</taxon>
        <taxon>Saccharomycetes</taxon>
        <taxon>Saccharomycetales</taxon>
        <taxon>Saccharomycetaceae</taxon>
        <taxon>Saccharomyces</taxon>
    </lineage>
</organism>
<comment type="function">
    <text evidence="1">RNA-binding protein that binds specific mRNAs including the ASH1 mRNA, coding for a repressor of the HO endonuclease. Part of the mRNA localization machinery that restricts accumulation of certain proteins to the bud and in the daughter cell. Recruits the MYO4-SHE3 complex to the ASH1 mRNA. Also recruits LOC1 and PUF6 to ASH1 mRNA, which are required for translational repression of this mRNA (By similarity).</text>
</comment>
<comment type="subunit">
    <text evidence="1">Homodimer and homotetramer. Interacts with LOC1, MYO4, PUF6, SHE3 and with RNA pol II subunits RPO21, SPT4 and SPT5.</text>
</comment>
<comment type="subcellular location">
    <subcellularLocation>
        <location evidence="2">Cytoplasm</location>
    </subcellularLocation>
    <subcellularLocation>
        <location evidence="2">Nucleus</location>
    </subcellularLocation>
    <text evidence="2">Shuttles between the nucleus and cytoplasm and is exported in an mRNA-dependent manner. The presence in the nucleus is essential for PUF6 and LOC1 to bind the ASH1 mRNA.</text>
</comment>
<comment type="similarity">
    <text evidence="3">Belongs to the SHE2 family.</text>
</comment>
<keyword id="KW-0963">Cytoplasm</keyword>
<keyword id="KW-0509">mRNA transport</keyword>
<keyword id="KW-0539">Nucleus</keyword>
<keyword id="KW-0694">RNA-binding</keyword>
<keyword id="KW-0813">Transport</keyword>
<reference key="1">
    <citation type="journal article" date="2009" name="Genome Res.">
        <title>Genome structure of a Saccharomyces cerevisiae strain widely used in bioethanol production.</title>
        <authorList>
            <person name="Argueso J.L."/>
            <person name="Carazzolle M.F."/>
            <person name="Mieczkowski P.A."/>
            <person name="Duarte F.M."/>
            <person name="Netto O.V.C."/>
            <person name="Missawa S.K."/>
            <person name="Galzerani F."/>
            <person name="Costa G.G.L."/>
            <person name="Vidal R.O."/>
            <person name="Noronha M.F."/>
            <person name="Dominska M."/>
            <person name="Andrietta M.G.S."/>
            <person name="Andrietta S.R."/>
            <person name="Cunha A.F."/>
            <person name="Gomes L.H."/>
            <person name="Tavares F.C.A."/>
            <person name="Alcarde A.R."/>
            <person name="Dietrich F.S."/>
            <person name="McCusker J.H."/>
            <person name="Petes T.D."/>
            <person name="Pereira G.A.G."/>
        </authorList>
    </citation>
    <scope>NUCLEOTIDE SEQUENCE [LARGE SCALE GENOMIC DNA]</scope>
    <source>
        <strain>JAY291</strain>
    </source>
</reference>
<feature type="chain" id="PRO_0000408922" description="She2p">
    <location>
        <begin position="1"/>
        <end position="246"/>
    </location>
</feature>
<feature type="short sequence motif" description="Nuclear localization signal" evidence="1">
    <location>
        <begin position="15"/>
        <end position="23"/>
    </location>
</feature>
<sequence length="246" mass="28251">MSKDKDIKVTPGTCELVEQILALLSRYLSSYIHVLNKFISHLRRVATLRFERTTLIKFVKKLRFYNDCVLSYNASEFINEGKNELDPEADSFDKVILPIASMFVKCVETFDLLNYYLTQSLQKEILSKTLNEDLTLTAESILAIDDTYNHFVKFSQWMIESLRIGSNLLDLEVVQFAIKCADEDGTNIGETDNIFLQEILPVNSEEEFQTLSAAWHSILDGKLSALDEEFDVVATKWHDKFGKLKN</sequence>
<dbReference type="EMBL" id="ACFL01000357">
    <property type="protein sequence ID" value="EEU05171.1"/>
    <property type="molecule type" value="Genomic_DNA"/>
</dbReference>
<dbReference type="SMR" id="C7GVI5"/>
<dbReference type="Proteomes" id="UP000008073">
    <property type="component" value="Unassembled WGS sequence"/>
</dbReference>
<dbReference type="GO" id="GO:0005737">
    <property type="term" value="C:cytoplasm"/>
    <property type="evidence" value="ECO:0007669"/>
    <property type="project" value="UniProtKB-SubCell"/>
</dbReference>
<dbReference type="GO" id="GO:0005634">
    <property type="term" value="C:nucleus"/>
    <property type="evidence" value="ECO:0007669"/>
    <property type="project" value="UniProtKB-SubCell"/>
</dbReference>
<dbReference type="GO" id="GO:0003723">
    <property type="term" value="F:RNA binding"/>
    <property type="evidence" value="ECO:0007669"/>
    <property type="project" value="UniProtKB-KW"/>
</dbReference>
<dbReference type="GO" id="GO:0051028">
    <property type="term" value="P:mRNA transport"/>
    <property type="evidence" value="ECO:0007669"/>
    <property type="project" value="UniProtKB-KW"/>
</dbReference>
<dbReference type="FunFam" id="1.20.200.20:FF:000001">
    <property type="entry name" value="SWI5-dependent HO expression protein 2"/>
    <property type="match status" value="1"/>
</dbReference>
<dbReference type="Gene3D" id="1.20.200.20">
    <property type="entry name" value="She2 domain"/>
    <property type="match status" value="1"/>
</dbReference>
<dbReference type="InterPro" id="IPR024261">
    <property type="entry name" value="RNA-bd_She2"/>
</dbReference>
<dbReference type="InterPro" id="IPR036827">
    <property type="entry name" value="She2_dom_sf"/>
</dbReference>
<dbReference type="Pfam" id="PF11435">
    <property type="entry name" value="She2p"/>
    <property type="match status" value="1"/>
</dbReference>
<dbReference type="SUPFAM" id="SSF116942">
    <property type="entry name" value="RNA-binding protein She2p"/>
    <property type="match status" value="1"/>
</dbReference>
<accession>C7GVI5</accession>
<protein>
    <recommendedName>
        <fullName>She2p</fullName>
    </recommendedName>
</protein>
<gene>
    <name type="primary">SHE2</name>
    <name type="ORF">C1Q_04512</name>
</gene>
<proteinExistence type="inferred from homology"/>